<protein>
    <recommendedName>
        <fullName evidence="1">Glutamate-1-semialdehyde 2,1-aminomutase</fullName>
        <shortName evidence="1">GSA</shortName>
        <ecNumber evidence="1">5.4.3.8</ecNumber>
    </recommendedName>
    <alternativeName>
        <fullName evidence="1">Glutamate-1-semialdehyde aminotransferase</fullName>
        <shortName evidence="1">GSA-AT</shortName>
    </alternativeName>
</protein>
<gene>
    <name evidence="1" type="primary">hemL</name>
    <name type="ordered locus">Cpar_0149</name>
</gene>
<proteinExistence type="inferred from homology"/>
<accession>B3QRD2</accession>
<organism>
    <name type="scientific">Chlorobaculum parvum (strain DSM 263 / NCIMB 8327)</name>
    <name type="common">Chlorobium vibrioforme subsp. thiosulfatophilum</name>
    <dbReference type="NCBI Taxonomy" id="517417"/>
    <lineage>
        <taxon>Bacteria</taxon>
        <taxon>Pseudomonadati</taxon>
        <taxon>Chlorobiota</taxon>
        <taxon>Chlorobiia</taxon>
        <taxon>Chlorobiales</taxon>
        <taxon>Chlorobiaceae</taxon>
        <taxon>Chlorobaculum</taxon>
    </lineage>
</organism>
<feature type="chain" id="PRO_1000121865" description="Glutamate-1-semialdehyde 2,1-aminomutase">
    <location>
        <begin position="1"/>
        <end position="431"/>
    </location>
</feature>
<feature type="modified residue" description="N6-(pyridoxal phosphate)lysine" evidence="1">
    <location>
        <position position="269"/>
    </location>
</feature>
<comment type="catalytic activity">
    <reaction evidence="1">
        <text>(S)-4-amino-5-oxopentanoate = 5-aminolevulinate</text>
        <dbReference type="Rhea" id="RHEA:14265"/>
        <dbReference type="ChEBI" id="CHEBI:57501"/>
        <dbReference type="ChEBI" id="CHEBI:356416"/>
        <dbReference type="EC" id="5.4.3.8"/>
    </reaction>
</comment>
<comment type="cofactor">
    <cofactor evidence="1">
        <name>pyridoxal 5'-phosphate</name>
        <dbReference type="ChEBI" id="CHEBI:597326"/>
    </cofactor>
</comment>
<comment type="pathway">
    <text evidence="1">Porphyrin-containing compound metabolism; protoporphyrin-IX biosynthesis; 5-aminolevulinate from L-glutamyl-tRNA(Glu): step 2/2.</text>
</comment>
<comment type="pathway">
    <text evidence="1">Porphyrin-containing compound metabolism; chlorophyll biosynthesis.</text>
</comment>
<comment type="subunit">
    <text evidence="1">Homodimer.</text>
</comment>
<comment type="subcellular location">
    <subcellularLocation>
        <location evidence="1">Cytoplasm</location>
    </subcellularLocation>
</comment>
<comment type="similarity">
    <text evidence="1">Belongs to the class-III pyridoxal-phosphate-dependent aminotransferase family. HemL subfamily.</text>
</comment>
<evidence type="ECO:0000255" key="1">
    <source>
        <dbReference type="HAMAP-Rule" id="MF_00375"/>
    </source>
</evidence>
<name>GSA_CHLP8</name>
<sequence length="431" mass="46340">MPVLTRSAELFEKAKKFIPGGVNSPVRAFKSVGGTPIYMAKGQGAYMTDVDGNTYLDYVGSWGPFILGSMHPRLTAAIEYTLRNIGTSFGTPIEIEIEIAELLCQIVPSLEMVRMVNSGTEATMSAVRLARGYTGKDKIIKFEGCYHGHGDSFLIKAGSGVLTLGDPDSPGVTKGTANDTLNATYNDIESVKAIVNENKGQVAAIIIEPVAGNTGVIPAKKEFLVALRELCDAEGIVLIFDEVMCGFRVALGGAQELYGVTPDLTTMGKIIGGGLPVGAFGGKRKIMENIAPLGSVYQAGTLSGNPLALTAGLETLKILMEENPYPELERKAAFLEAGFKDNMNKLGLNYTQNRVGSMACLFFTENEVYDYNSAITADTAKYGKYFHSMLDQGIYLAPSQFEAMFTSFVHTDEDLEKTVKANYNALVAATK</sequence>
<keyword id="KW-0149">Chlorophyll biosynthesis</keyword>
<keyword id="KW-0963">Cytoplasm</keyword>
<keyword id="KW-0413">Isomerase</keyword>
<keyword id="KW-0627">Porphyrin biosynthesis</keyword>
<keyword id="KW-0663">Pyridoxal phosphate</keyword>
<reference key="1">
    <citation type="submission" date="2008-06" db="EMBL/GenBank/DDBJ databases">
        <title>Complete sequence of Chlorobaculum parvum NCIB 8327.</title>
        <authorList>
            <consortium name="US DOE Joint Genome Institute"/>
            <person name="Lucas S."/>
            <person name="Copeland A."/>
            <person name="Lapidus A."/>
            <person name="Glavina del Rio T."/>
            <person name="Dalin E."/>
            <person name="Tice H."/>
            <person name="Bruce D."/>
            <person name="Goodwin L."/>
            <person name="Pitluck S."/>
            <person name="Schmutz J."/>
            <person name="Larimer F."/>
            <person name="Land M."/>
            <person name="Hauser L."/>
            <person name="Kyrpides N."/>
            <person name="Mikhailova N."/>
            <person name="Zhao F."/>
            <person name="Li T."/>
            <person name="Liu Z."/>
            <person name="Overmann J."/>
            <person name="Bryant D.A."/>
            <person name="Richardson P."/>
        </authorList>
    </citation>
    <scope>NUCLEOTIDE SEQUENCE [LARGE SCALE GENOMIC DNA]</scope>
    <source>
        <strain>DSM 263 / NCIMB 8327</strain>
    </source>
</reference>
<dbReference type="EC" id="5.4.3.8" evidence="1"/>
<dbReference type="EMBL" id="CP001099">
    <property type="protein sequence ID" value="ACF10576.1"/>
    <property type="molecule type" value="Genomic_DNA"/>
</dbReference>
<dbReference type="RefSeq" id="WP_012501411.1">
    <property type="nucleotide sequence ID" value="NC_011027.1"/>
</dbReference>
<dbReference type="SMR" id="B3QRD2"/>
<dbReference type="STRING" id="517417.Cpar_0149"/>
<dbReference type="KEGG" id="cpc:Cpar_0149"/>
<dbReference type="eggNOG" id="COG0001">
    <property type="taxonomic scope" value="Bacteria"/>
</dbReference>
<dbReference type="HOGENOM" id="CLU_016922_1_5_10"/>
<dbReference type="OrthoDB" id="9807885at2"/>
<dbReference type="UniPathway" id="UPA00251">
    <property type="reaction ID" value="UER00317"/>
</dbReference>
<dbReference type="UniPathway" id="UPA00668"/>
<dbReference type="Proteomes" id="UP000008811">
    <property type="component" value="Chromosome"/>
</dbReference>
<dbReference type="GO" id="GO:0005737">
    <property type="term" value="C:cytoplasm"/>
    <property type="evidence" value="ECO:0007669"/>
    <property type="project" value="UniProtKB-SubCell"/>
</dbReference>
<dbReference type="GO" id="GO:0042286">
    <property type="term" value="F:glutamate-1-semialdehyde 2,1-aminomutase activity"/>
    <property type="evidence" value="ECO:0007669"/>
    <property type="project" value="UniProtKB-UniRule"/>
</dbReference>
<dbReference type="GO" id="GO:0030170">
    <property type="term" value="F:pyridoxal phosphate binding"/>
    <property type="evidence" value="ECO:0007669"/>
    <property type="project" value="InterPro"/>
</dbReference>
<dbReference type="GO" id="GO:0008483">
    <property type="term" value="F:transaminase activity"/>
    <property type="evidence" value="ECO:0007669"/>
    <property type="project" value="InterPro"/>
</dbReference>
<dbReference type="GO" id="GO:0015995">
    <property type="term" value="P:chlorophyll biosynthetic process"/>
    <property type="evidence" value="ECO:0007669"/>
    <property type="project" value="UniProtKB-UniRule"/>
</dbReference>
<dbReference type="GO" id="GO:0006782">
    <property type="term" value="P:protoporphyrinogen IX biosynthetic process"/>
    <property type="evidence" value="ECO:0007669"/>
    <property type="project" value="UniProtKB-UniRule"/>
</dbReference>
<dbReference type="CDD" id="cd00610">
    <property type="entry name" value="OAT_like"/>
    <property type="match status" value="1"/>
</dbReference>
<dbReference type="FunFam" id="3.40.640.10:FF:000021">
    <property type="entry name" value="Glutamate-1-semialdehyde 2,1-aminomutase"/>
    <property type="match status" value="1"/>
</dbReference>
<dbReference type="Gene3D" id="3.90.1150.10">
    <property type="entry name" value="Aspartate Aminotransferase, domain 1"/>
    <property type="match status" value="1"/>
</dbReference>
<dbReference type="Gene3D" id="3.40.640.10">
    <property type="entry name" value="Type I PLP-dependent aspartate aminotransferase-like (Major domain)"/>
    <property type="match status" value="1"/>
</dbReference>
<dbReference type="HAMAP" id="MF_00375">
    <property type="entry name" value="HemL_aminotrans_3"/>
    <property type="match status" value="1"/>
</dbReference>
<dbReference type="InterPro" id="IPR004639">
    <property type="entry name" value="4pyrrol_synth_GluAld_NH2Trfase"/>
</dbReference>
<dbReference type="InterPro" id="IPR005814">
    <property type="entry name" value="Aminotrans_3"/>
</dbReference>
<dbReference type="InterPro" id="IPR049704">
    <property type="entry name" value="Aminotrans_3_PPA_site"/>
</dbReference>
<dbReference type="InterPro" id="IPR015424">
    <property type="entry name" value="PyrdxlP-dep_Trfase"/>
</dbReference>
<dbReference type="InterPro" id="IPR015421">
    <property type="entry name" value="PyrdxlP-dep_Trfase_major"/>
</dbReference>
<dbReference type="InterPro" id="IPR015422">
    <property type="entry name" value="PyrdxlP-dep_Trfase_small"/>
</dbReference>
<dbReference type="NCBIfam" id="TIGR00713">
    <property type="entry name" value="hemL"/>
    <property type="match status" value="1"/>
</dbReference>
<dbReference type="NCBIfam" id="NF000818">
    <property type="entry name" value="PRK00062.1"/>
    <property type="match status" value="1"/>
</dbReference>
<dbReference type="PANTHER" id="PTHR43713">
    <property type="entry name" value="GLUTAMATE-1-SEMIALDEHYDE 2,1-AMINOMUTASE"/>
    <property type="match status" value="1"/>
</dbReference>
<dbReference type="PANTHER" id="PTHR43713:SF3">
    <property type="entry name" value="GLUTAMATE-1-SEMIALDEHYDE 2,1-AMINOMUTASE 1, CHLOROPLASTIC-RELATED"/>
    <property type="match status" value="1"/>
</dbReference>
<dbReference type="Pfam" id="PF00202">
    <property type="entry name" value="Aminotran_3"/>
    <property type="match status" value="1"/>
</dbReference>
<dbReference type="SUPFAM" id="SSF53383">
    <property type="entry name" value="PLP-dependent transferases"/>
    <property type="match status" value="1"/>
</dbReference>
<dbReference type="PROSITE" id="PS00600">
    <property type="entry name" value="AA_TRANSFER_CLASS_3"/>
    <property type="match status" value="1"/>
</dbReference>